<keyword id="KW-1003">Cell membrane</keyword>
<keyword id="KW-0868">Chloride</keyword>
<keyword id="KW-0869">Chloride channel</keyword>
<keyword id="KW-1015">Disulfide bond</keyword>
<keyword id="KW-0325">Glycoprotein</keyword>
<keyword id="KW-0407">Ion channel</keyword>
<keyword id="KW-0406">Ion transport</keyword>
<keyword id="KW-1071">Ligand-gated ion channel</keyword>
<keyword id="KW-0472">Membrane</keyword>
<keyword id="KW-0597">Phosphoprotein</keyword>
<keyword id="KW-0628">Postsynaptic cell membrane</keyword>
<keyword id="KW-0675">Receptor</keyword>
<keyword id="KW-1185">Reference proteome</keyword>
<keyword id="KW-0732">Signal</keyword>
<keyword id="KW-0770">Synapse</keyword>
<keyword id="KW-0812">Transmembrane</keyword>
<keyword id="KW-1133">Transmembrane helix</keyword>
<keyword id="KW-0813">Transport</keyword>
<sequence length="492" mass="55284">MIITQMSQFYMAGLGLLFLINILPGTTGQVESRRQEPGDFVKQDIGGLSPKHAPDIPDDSTDNITIFTRILDRLLDGYDNRLRPGLGDAVTEVKTDIYVTSFGPVSDTDMEYTIDVFFRQTWHDERLKFDGPMKILPLNNLLASKIWTPDTFFHNGKKSVAHNMTTPNKLLRLVDNGTLLYTMRLTIHAECPMHLEDFPMDVHACPLKFGSYAYTTAEVVYSWTLGKNKSVEVAQDGSRLNQYDLLGHVVGTEIIRSSTGEYVVMTTHFHLKRKIGYFVIQTYLPCIMTVILSQVSFWLNRESVPARTVFGVTTVLTMTTLSISARNSLPKVAYATAMDWFMAVCYAFVFSALIEFATVNYFTKRSWAWEGKKVPEALEMKKKTPAVPTKKTSTTFNIVGTTYPINLAKDTEFSAISKGAAPSTSSTPTIIASPKTTCVQDIPTETKTYNSVSKVDKISRIIFPVLFAIFNLVYWATYVNRESAIKGMIRKQ</sequence>
<organism>
    <name type="scientific">Bos taurus</name>
    <name type="common">Bovine</name>
    <dbReference type="NCBI Taxonomy" id="9913"/>
    <lineage>
        <taxon>Eukaryota</taxon>
        <taxon>Metazoa</taxon>
        <taxon>Chordata</taxon>
        <taxon>Craniata</taxon>
        <taxon>Vertebrata</taxon>
        <taxon>Euteleostomi</taxon>
        <taxon>Mammalia</taxon>
        <taxon>Eutheria</taxon>
        <taxon>Laurasiatheria</taxon>
        <taxon>Artiodactyla</taxon>
        <taxon>Ruminantia</taxon>
        <taxon>Pecora</taxon>
        <taxon>Bovidae</taxon>
        <taxon>Bovinae</taxon>
        <taxon>Bos</taxon>
    </lineage>
</organism>
<protein>
    <recommendedName>
        <fullName evidence="2">Gamma-aminobutyric acid receptor subunit alpha-3</fullName>
    </recommendedName>
    <alternativeName>
        <fullName evidence="2">GABA(A) receptor subunit alpha-3</fullName>
        <shortName>GABAAR subunit alpha-3</shortName>
    </alternativeName>
</protein>
<comment type="function">
    <text evidence="1 3">Alpha subunit of the heteropentameric ligand-gated chloride channel gated by gamma-aminobutyric acid (GABA), a major inhibitory neurotransmitter in the brain (By similarity). GABA-gated chloride channels, also named GABA(A) receptors (GABAAR), consist of five subunits arranged around a central pore and contain GABA active binding site(s) located at the alpha and beta subunit interface(s) (By similarity). When activated by GABA, GABAARs selectively allow the flow of chloride anions across the cell membrane down their electrochemical gradient. Chloride influx into the postsynaptic neuron following GABAAR opening decreases the neuron ability to generate a new action potential, thereby reducing nerve transmission (By similarity).</text>
</comment>
<comment type="catalytic activity">
    <reaction evidence="1">
        <text>chloride(in) = chloride(out)</text>
        <dbReference type="Rhea" id="RHEA:29823"/>
        <dbReference type="ChEBI" id="CHEBI:17996"/>
    </reaction>
</comment>
<comment type="subunit">
    <text evidence="2 3">Heteropentamer, formed by a combination of alpha (GABRA1-6), beta (GABRB1-3), gamma (GABRG1-3), delta (GABRD), epsilon (GABRE), rho (GABRR1-3), pi (GABRP) and theta (GABRQ) chains, each subunit exhibiting distinct physiological and pharmacological properties (By similarity). Binds UBQLN1 (By similarity). Interacts with GPHN (By similarity).</text>
</comment>
<comment type="subcellular location">
    <subcellularLocation>
        <location evidence="1">Postsynaptic cell membrane</location>
        <topology>Multi-pass membrane protein</topology>
    </subcellularLocation>
    <subcellularLocation>
        <location evidence="1">Cell membrane</location>
        <topology>Multi-pass membrane protein</topology>
    </subcellularLocation>
</comment>
<comment type="domain">
    <text evidence="1">GABAARs subunits share a common topological structure: a peptide sequence made up of a long extracellular N-terminal, four transmembrane domains, intracellular or cytoplasmic domain located between the third and the fourth transmembrane domains.</text>
</comment>
<comment type="similarity">
    <text evidence="6">Belongs to the ligand-gated ion channel (TC 1.A.9) family. Gamma-aminobutyric acid receptor (TC 1.A.9.5) subfamily. GABRA3 sub-subfamily.</text>
</comment>
<dbReference type="EMBL" id="X12362">
    <property type="protein sequence ID" value="CAA30925.1"/>
    <property type="molecule type" value="mRNA"/>
</dbReference>
<dbReference type="PIR" id="S12511">
    <property type="entry name" value="CHBOA3"/>
</dbReference>
<dbReference type="RefSeq" id="NP_776967.1">
    <property type="nucleotide sequence ID" value="NM_174542.2"/>
</dbReference>
<dbReference type="SMR" id="P10064"/>
<dbReference type="FunCoup" id="P10064">
    <property type="interactions" value="1295"/>
</dbReference>
<dbReference type="STRING" id="9913.ENSBTAP00000008798"/>
<dbReference type="ChEMBL" id="CHEMBL2094107"/>
<dbReference type="DrugCentral" id="P10064"/>
<dbReference type="GlyCosmos" id="P10064">
    <property type="glycosylation" value="4 sites, No reported glycans"/>
</dbReference>
<dbReference type="GlyGen" id="P10064">
    <property type="glycosylation" value="4 sites"/>
</dbReference>
<dbReference type="PaxDb" id="9913-ENSBTAP00000008798"/>
<dbReference type="GeneID" id="282237"/>
<dbReference type="KEGG" id="bta:282237"/>
<dbReference type="CTD" id="2556"/>
<dbReference type="eggNOG" id="KOG3642">
    <property type="taxonomic scope" value="Eukaryota"/>
</dbReference>
<dbReference type="InParanoid" id="P10064"/>
<dbReference type="OrthoDB" id="203862at2759"/>
<dbReference type="PRO" id="PR:P10064"/>
<dbReference type="Proteomes" id="UP000009136">
    <property type="component" value="Unplaced"/>
</dbReference>
<dbReference type="GO" id="GO:0034707">
    <property type="term" value="C:chloride channel complex"/>
    <property type="evidence" value="ECO:0007669"/>
    <property type="project" value="UniProtKB-KW"/>
</dbReference>
<dbReference type="GO" id="GO:0032590">
    <property type="term" value="C:dendrite membrane"/>
    <property type="evidence" value="ECO:0000318"/>
    <property type="project" value="GO_Central"/>
</dbReference>
<dbReference type="GO" id="GO:1902711">
    <property type="term" value="C:GABA-A receptor complex"/>
    <property type="evidence" value="ECO:0000318"/>
    <property type="project" value="GO_Central"/>
</dbReference>
<dbReference type="GO" id="GO:0098794">
    <property type="term" value="C:postsynapse"/>
    <property type="evidence" value="ECO:0000318"/>
    <property type="project" value="GO_Central"/>
</dbReference>
<dbReference type="GO" id="GO:0045211">
    <property type="term" value="C:postsynaptic membrane"/>
    <property type="evidence" value="ECO:0007669"/>
    <property type="project" value="UniProtKB-SubCell"/>
</dbReference>
<dbReference type="GO" id="GO:0004890">
    <property type="term" value="F:GABA-A receptor activity"/>
    <property type="evidence" value="ECO:0000250"/>
    <property type="project" value="UniProtKB"/>
</dbReference>
<dbReference type="GO" id="GO:0022851">
    <property type="term" value="F:GABA-gated chloride ion channel activity"/>
    <property type="evidence" value="ECO:0000250"/>
    <property type="project" value="UniProtKB"/>
</dbReference>
<dbReference type="GO" id="GO:1902476">
    <property type="term" value="P:chloride transmembrane transport"/>
    <property type="evidence" value="ECO:0000318"/>
    <property type="project" value="GO_Central"/>
</dbReference>
<dbReference type="GO" id="GO:0007214">
    <property type="term" value="P:gamma-aminobutyric acid signaling pathway"/>
    <property type="evidence" value="ECO:0000318"/>
    <property type="project" value="GO_Central"/>
</dbReference>
<dbReference type="GO" id="GO:1904862">
    <property type="term" value="P:inhibitory synapse assembly"/>
    <property type="evidence" value="ECO:0000318"/>
    <property type="project" value="GO_Central"/>
</dbReference>
<dbReference type="GO" id="GO:0051932">
    <property type="term" value="P:synaptic transmission, GABAergic"/>
    <property type="evidence" value="ECO:0000318"/>
    <property type="project" value="GO_Central"/>
</dbReference>
<dbReference type="CDD" id="cd19036">
    <property type="entry name" value="LGIC_ECD_GABAAR_A3"/>
    <property type="match status" value="1"/>
</dbReference>
<dbReference type="CDD" id="cd19052">
    <property type="entry name" value="LGIC_TM_GABAAR_alpha"/>
    <property type="match status" value="1"/>
</dbReference>
<dbReference type="FunFam" id="2.70.170.10:FF:000001">
    <property type="entry name" value="Gamma-aminobutyric acid A receptor subunit alpha-2"/>
    <property type="match status" value="1"/>
</dbReference>
<dbReference type="FunFam" id="1.20.58.390:FF:000002">
    <property type="entry name" value="Putative gamma-aminobutyric acid receptor subunit alpha-5"/>
    <property type="match status" value="1"/>
</dbReference>
<dbReference type="Gene3D" id="2.70.170.10">
    <property type="entry name" value="Neurotransmitter-gated ion-channel ligand-binding domain"/>
    <property type="match status" value="1"/>
</dbReference>
<dbReference type="Gene3D" id="1.20.58.390">
    <property type="entry name" value="Neurotransmitter-gated ion-channel transmembrane domain"/>
    <property type="match status" value="1"/>
</dbReference>
<dbReference type="InterPro" id="IPR006028">
    <property type="entry name" value="GABAA/Glycine_rcpt"/>
</dbReference>
<dbReference type="InterPro" id="IPR001390">
    <property type="entry name" value="GABAAa_rcpt"/>
</dbReference>
<dbReference type="InterPro" id="IPR005433">
    <property type="entry name" value="GABBAa3_rcpt"/>
</dbReference>
<dbReference type="InterPro" id="IPR047024">
    <property type="entry name" value="Gabra-1-6_TM"/>
</dbReference>
<dbReference type="InterPro" id="IPR006202">
    <property type="entry name" value="Neur_chan_lig-bd"/>
</dbReference>
<dbReference type="InterPro" id="IPR036734">
    <property type="entry name" value="Neur_chan_lig-bd_sf"/>
</dbReference>
<dbReference type="InterPro" id="IPR006201">
    <property type="entry name" value="Neur_channel"/>
</dbReference>
<dbReference type="InterPro" id="IPR036719">
    <property type="entry name" value="Neuro-gated_channel_TM_sf"/>
</dbReference>
<dbReference type="InterPro" id="IPR038050">
    <property type="entry name" value="Neuro_actylchol_rec"/>
</dbReference>
<dbReference type="InterPro" id="IPR006029">
    <property type="entry name" value="Neurotrans-gated_channel_TM"/>
</dbReference>
<dbReference type="InterPro" id="IPR018000">
    <property type="entry name" value="Neurotransmitter_ion_chnl_CS"/>
</dbReference>
<dbReference type="NCBIfam" id="TIGR00860">
    <property type="entry name" value="LIC"/>
    <property type="match status" value="1"/>
</dbReference>
<dbReference type="PANTHER" id="PTHR18945">
    <property type="entry name" value="NEUROTRANSMITTER GATED ION CHANNEL"/>
    <property type="match status" value="1"/>
</dbReference>
<dbReference type="Pfam" id="PF02931">
    <property type="entry name" value="Neur_chan_LBD"/>
    <property type="match status" value="1"/>
</dbReference>
<dbReference type="Pfam" id="PF02932">
    <property type="entry name" value="Neur_chan_memb"/>
    <property type="match status" value="1"/>
</dbReference>
<dbReference type="PRINTS" id="PR01079">
    <property type="entry name" value="GABAARALPHA"/>
</dbReference>
<dbReference type="PRINTS" id="PR01616">
    <property type="entry name" value="GABAARALPHA3"/>
</dbReference>
<dbReference type="PRINTS" id="PR00253">
    <property type="entry name" value="GABAARECEPTR"/>
</dbReference>
<dbReference type="PRINTS" id="PR00252">
    <property type="entry name" value="NRIONCHANNEL"/>
</dbReference>
<dbReference type="SUPFAM" id="SSF90112">
    <property type="entry name" value="Neurotransmitter-gated ion-channel transmembrane pore"/>
    <property type="match status" value="1"/>
</dbReference>
<dbReference type="SUPFAM" id="SSF63712">
    <property type="entry name" value="Nicotinic receptor ligand binding domain-like"/>
    <property type="match status" value="1"/>
</dbReference>
<dbReference type="PROSITE" id="PS00236">
    <property type="entry name" value="NEUROTR_ION_CHANNEL"/>
    <property type="match status" value="1"/>
</dbReference>
<proteinExistence type="evidence at transcript level"/>
<evidence type="ECO:0000250" key="1">
    <source>
        <dbReference type="UniProtKB" id="P14867"/>
    </source>
</evidence>
<evidence type="ECO:0000250" key="2">
    <source>
        <dbReference type="UniProtKB" id="P26049"/>
    </source>
</evidence>
<evidence type="ECO:0000250" key="3">
    <source>
        <dbReference type="UniProtKB" id="P34903"/>
    </source>
</evidence>
<evidence type="ECO:0000250" key="4">
    <source>
        <dbReference type="UniProtKB" id="P62813"/>
    </source>
</evidence>
<evidence type="ECO:0000255" key="5"/>
<evidence type="ECO:0000305" key="6"/>
<accession>P10064</accession>
<name>GBRA3_BOVIN</name>
<feature type="signal peptide" evidence="5">
    <location>
        <begin position="1"/>
        <end position="28"/>
    </location>
</feature>
<feature type="chain" id="PRO_0000000436" description="Gamma-aminobutyric acid receptor subunit alpha-3">
    <location>
        <begin position="29"/>
        <end position="492"/>
    </location>
</feature>
<feature type="topological domain" description="Extracellular" evidence="6">
    <location>
        <begin position="29"/>
        <end position="274"/>
    </location>
</feature>
<feature type="transmembrane region" description="Helical" evidence="5">
    <location>
        <begin position="275"/>
        <end position="295"/>
    </location>
</feature>
<feature type="topological domain" description="Cytoplasmic" evidence="6">
    <location>
        <begin position="296"/>
        <end position="305"/>
    </location>
</feature>
<feature type="transmembrane region" description="Helical" evidence="5">
    <location>
        <begin position="306"/>
        <end position="325"/>
    </location>
</feature>
<feature type="topological domain" description="Extracellular" evidence="6">
    <location>
        <begin position="326"/>
        <end position="336"/>
    </location>
</feature>
<feature type="transmembrane region" description="Helical" evidence="5">
    <location>
        <begin position="337"/>
        <end position="357"/>
    </location>
</feature>
<feature type="topological domain" description="Cytoplasmic" evidence="6">
    <location>
        <begin position="358"/>
        <end position="457"/>
    </location>
</feature>
<feature type="transmembrane region" description="Helical" evidence="5">
    <location>
        <begin position="458"/>
        <end position="478"/>
    </location>
</feature>
<feature type="topological domain" description="Extracellular" evidence="6">
    <location>
        <begin position="479"/>
        <end position="492"/>
    </location>
</feature>
<feature type="binding site" evidence="1">
    <location>
        <position position="119"/>
    </location>
    <ligand>
        <name>4-aminobutanoate</name>
        <dbReference type="ChEBI" id="CHEBI:59888"/>
        <note>ligand shared with the neighboring beta subunit</note>
    </ligand>
</feature>
<feature type="binding site" evidence="4">
    <location>
        <position position="182"/>
    </location>
    <ligand>
        <name>4-aminobutanoate</name>
        <dbReference type="ChEBI" id="CHEBI:59888"/>
        <note>ligand shared with the neighboring beta subunit</note>
    </ligand>
</feature>
<feature type="modified residue" description="Phosphoserine" evidence="2">
    <location>
        <position position="426"/>
    </location>
</feature>
<feature type="modified residue" description="Phosphothreonine" evidence="2">
    <location>
        <position position="427"/>
    </location>
</feature>
<feature type="modified residue" description="Phosphoserine" evidence="2">
    <location>
        <position position="433"/>
    </location>
</feature>
<feature type="glycosylation site" description="N-linked (GlcNAc...) asparagine" evidence="5">
    <location>
        <position position="63"/>
    </location>
</feature>
<feature type="glycosylation site" description="N-linked (GlcNAc...) asparagine" evidence="5">
    <location>
        <position position="163"/>
    </location>
</feature>
<feature type="glycosylation site" description="N-linked (GlcNAc...) asparagine" evidence="5">
    <location>
        <position position="176"/>
    </location>
</feature>
<feature type="glycosylation site" description="N-linked (GlcNAc...) asparagine" evidence="5">
    <location>
        <position position="228"/>
    </location>
</feature>
<feature type="disulfide bond" evidence="1">
    <location>
        <begin position="191"/>
        <end position="205"/>
    </location>
</feature>
<gene>
    <name type="primary">GABRA3</name>
</gene>
<reference key="1">
    <citation type="journal article" date="1988" name="Nature">
        <title>Structural and functional basis for GABAA receptor heterogeneity.</title>
        <authorList>
            <person name="Levitan E.S."/>
            <person name="Schofield P.R."/>
            <person name="Burt D.R."/>
            <person name="Rhee L.M."/>
            <person name="Wisdes W."/>
            <person name="Koehler M."/>
            <person name="Rodriguez H."/>
            <person name="Stephenson F.A."/>
            <person name="Darlison M.G."/>
            <person name="Barnard E.A."/>
            <person name="Seeburg P.H."/>
        </authorList>
    </citation>
    <scope>NUCLEOTIDE SEQUENCE [MRNA]</scope>
    <source>
        <tissue>Brain</tissue>
    </source>
</reference>